<proteinExistence type="inferred from homology"/>
<accession>Q59MF9</accession>
<accession>A0A1D8PHJ6</accession>
<name>COG6_CANAL</name>
<gene>
    <name type="primary">COG6</name>
    <name type="ordered locus">CAALFM_C205850CA</name>
    <name type="ORF">CaO19.12676</name>
    <name type="ORF">CaO19.5209</name>
</gene>
<dbReference type="EMBL" id="CP017624">
    <property type="protein sequence ID" value="AOW27596.1"/>
    <property type="molecule type" value="Genomic_DNA"/>
</dbReference>
<dbReference type="RefSeq" id="XP_710917.2">
    <property type="nucleotide sequence ID" value="XM_705825.2"/>
</dbReference>
<dbReference type="SMR" id="Q59MF9"/>
<dbReference type="FunCoup" id="Q59MF9">
    <property type="interactions" value="274"/>
</dbReference>
<dbReference type="STRING" id="237561.Q59MF9"/>
<dbReference type="EnsemblFungi" id="C2_05850C_A-T">
    <property type="protein sequence ID" value="C2_05850C_A-T-p1"/>
    <property type="gene ID" value="C2_05850C_A"/>
</dbReference>
<dbReference type="GeneID" id="3647472"/>
<dbReference type="KEGG" id="cal:CAALFM_C205850CA"/>
<dbReference type="CGD" id="CAL0000198191">
    <property type="gene designation" value="orf19.12676"/>
</dbReference>
<dbReference type="VEuPathDB" id="FungiDB:C2_05850C_A"/>
<dbReference type="eggNOG" id="KOG3758">
    <property type="taxonomic scope" value="Eukaryota"/>
</dbReference>
<dbReference type="HOGENOM" id="CLU_017837_0_0_1"/>
<dbReference type="InParanoid" id="Q59MF9"/>
<dbReference type="OrthoDB" id="272987at2759"/>
<dbReference type="PRO" id="PR:Q59MF9"/>
<dbReference type="Proteomes" id="UP000000559">
    <property type="component" value="Chromosome 2"/>
</dbReference>
<dbReference type="GO" id="GO:0000139">
    <property type="term" value="C:Golgi membrane"/>
    <property type="evidence" value="ECO:0007669"/>
    <property type="project" value="UniProtKB-SubCell"/>
</dbReference>
<dbReference type="GO" id="GO:0017119">
    <property type="term" value="C:Golgi transport complex"/>
    <property type="evidence" value="ECO:0000318"/>
    <property type="project" value="GO_Central"/>
</dbReference>
<dbReference type="GO" id="GO:0006891">
    <property type="term" value="P:intra-Golgi vesicle-mediated transport"/>
    <property type="evidence" value="ECO:0000318"/>
    <property type="project" value="GO_Central"/>
</dbReference>
<dbReference type="GO" id="GO:0015031">
    <property type="term" value="P:protein transport"/>
    <property type="evidence" value="ECO:0007669"/>
    <property type="project" value="UniProtKB-KW"/>
</dbReference>
<dbReference type="InterPro" id="IPR010490">
    <property type="entry name" value="COG6"/>
</dbReference>
<dbReference type="InterPro" id="IPR048369">
    <property type="entry name" value="COG6_C"/>
</dbReference>
<dbReference type="InterPro" id="IPR048368">
    <property type="entry name" value="COG6_N"/>
</dbReference>
<dbReference type="PANTHER" id="PTHR21506">
    <property type="entry name" value="COMPONENT OF OLIGOMERIC GOLGI COMPLEX 6"/>
    <property type="match status" value="1"/>
</dbReference>
<dbReference type="PANTHER" id="PTHR21506:SF0">
    <property type="entry name" value="CONSERVED OLIGOMERIC GOLGI COMPLEX SUBUNIT 6"/>
    <property type="match status" value="1"/>
</dbReference>
<dbReference type="Pfam" id="PF20653">
    <property type="entry name" value="COG6_C"/>
    <property type="match status" value="1"/>
</dbReference>
<dbReference type="Pfam" id="PF06419">
    <property type="entry name" value="COG6_N"/>
    <property type="match status" value="1"/>
</dbReference>
<dbReference type="SMART" id="SM01087">
    <property type="entry name" value="COG6"/>
    <property type="match status" value="1"/>
</dbReference>
<feature type="chain" id="PRO_0000339317" description="Conserved oligomeric Golgi complex subunit 6">
    <location>
        <begin position="1"/>
        <end position="771"/>
    </location>
</feature>
<keyword id="KW-0333">Golgi apparatus</keyword>
<keyword id="KW-0472">Membrane</keyword>
<keyword id="KW-0653">Protein transport</keyword>
<keyword id="KW-1185">Reference proteome</keyword>
<keyword id="KW-0813">Transport</keyword>
<reference key="1">
    <citation type="journal article" date="2004" name="Proc. Natl. Acad. Sci. U.S.A.">
        <title>The diploid genome sequence of Candida albicans.</title>
        <authorList>
            <person name="Jones T."/>
            <person name="Federspiel N.A."/>
            <person name="Chibana H."/>
            <person name="Dungan J."/>
            <person name="Kalman S."/>
            <person name="Magee B.B."/>
            <person name="Newport G."/>
            <person name="Thorstenson Y.R."/>
            <person name="Agabian N."/>
            <person name="Magee P.T."/>
            <person name="Davis R.W."/>
            <person name="Scherer S."/>
        </authorList>
    </citation>
    <scope>NUCLEOTIDE SEQUENCE [LARGE SCALE GENOMIC DNA]</scope>
    <source>
        <strain>SC5314 / ATCC MYA-2876</strain>
    </source>
</reference>
<reference key="2">
    <citation type="journal article" date="2007" name="Genome Biol.">
        <title>Assembly of the Candida albicans genome into sixteen supercontigs aligned on the eight chromosomes.</title>
        <authorList>
            <person name="van het Hoog M."/>
            <person name="Rast T.J."/>
            <person name="Martchenko M."/>
            <person name="Grindle S."/>
            <person name="Dignard D."/>
            <person name="Hogues H."/>
            <person name="Cuomo C."/>
            <person name="Berriman M."/>
            <person name="Scherer S."/>
            <person name="Magee B.B."/>
            <person name="Whiteway M."/>
            <person name="Chibana H."/>
            <person name="Nantel A."/>
            <person name="Magee P.T."/>
        </authorList>
    </citation>
    <scope>GENOME REANNOTATION</scope>
    <source>
        <strain>SC5314 / ATCC MYA-2876</strain>
    </source>
</reference>
<reference key="3">
    <citation type="journal article" date="2013" name="Genome Biol.">
        <title>Assembly of a phased diploid Candida albicans genome facilitates allele-specific measurements and provides a simple model for repeat and indel structure.</title>
        <authorList>
            <person name="Muzzey D."/>
            <person name="Schwartz K."/>
            <person name="Weissman J.S."/>
            <person name="Sherlock G."/>
        </authorList>
    </citation>
    <scope>NUCLEOTIDE SEQUENCE [LARGE SCALE GENOMIC DNA]</scope>
    <scope>GENOME REANNOTATION</scope>
    <source>
        <strain>SC5314 / ATCC MYA-2876</strain>
    </source>
</reference>
<sequence>MDFIDFDTFTKDASGSDNDVFPQPQPPLSLPIASNLDQFSKKLSNLVLPGNILNNDNTKPSNEISEVDNVMEKYAKMSIDLIKRETGDVQLENEEDSKESSVRTSLSTRLSRVLNDSLSDATIREIFSNLQERFDKESNGYVVDLIESGIVGSMSRKKFKGRIESELIRNQSNILKQYQPIVKQLKQIEVKLNKLNELSVQTNDKINKNFDFSNKLNLEIKDLNDNKRLIGLKKNLLISFKEKFTLNEYEEFVLNSGDLNNEFFTTLARAERINENCSILLSLDNPQLGLKIIAKSNQMINRSIDRIVSYTNKTLGNMYSLSSKSRLATLHQCFKYLQNKLNYFNSIVNTFSESRSKVLVDEFNRQVQGDFEVNGQGRSSSISSDSRPIYMSAHDPVRFVGDLLAYVHSVSVNESETITSIFTMGDDNDKEFENIIQDVTDKILQSLSRPIKARVEQIVSTETKLSTLVQIFNLVELYNIMFTKQLGKAGNIVETVKQLIKVCQGRIFMIISNRLATIKNKNSTKLDLNLDLQPPEWIIEFYSDILPIVDQITTETILNLSPEENEKFLNLIVNEPIQVFNEHVDHNKVFSEKKDVLIIKSNFLDLILSKTIPVSLLSEKVLEVNEMIDKLTEEITQLELNNMLGQCGLYDYFNIINMICPFSDDFFEVSIYEPIKENKLYTKDSFVQVDEKVQEFFPSAMIEMQQSLLKLNSPIVVNQIIDNSFMQFVKFYCKLDLINKEYLDFSFTWSDMEIATLVGIEDVYSKDISIM</sequence>
<protein>
    <recommendedName>
        <fullName>Conserved oligomeric Golgi complex subunit 6</fullName>
        <shortName>COG complex subunit 6</shortName>
    </recommendedName>
    <alternativeName>
        <fullName>Component of oligomeric Golgi complex 6</fullName>
    </alternativeName>
</protein>
<comment type="function">
    <text evidence="1">Acts as a component of the peripheral membrane COG complex that is involved in intra-Golgi protein trafficking. COG is located at the cis-Golgi, and regulates tethering of retrograde intra-Golgi vesicles and possibly a number of other membrane trafficking events (By similarity).</text>
</comment>
<comment type="subcellular location">
    <subcellularLocation>
        <location evidence="1">Golgi apparatus membrane</location>
        <topology evidence="1">Peripheral membrane protein</topology>
    </subcellularLocation>
</comment>
<comment type="similarity">
    <text evidence="2">Belongs to the COG6 family.</text>
</comment>
<organism>
    <name type="scientific">Candida albicans (strain SC5314 / ATCC MYA-2876)</name>
    <name type="common">Yeast</name>
    <dbReference type="NCBI Taxonomy" id="237561"/>
    <lineage>
        <taxon>Eukaryota</taxon>
        <taxon>Fungi</taxon>
        <taxon>Dikarya</taxon>
        <taxon>Ascomycota</taxon>
        <taxon>Saccharomycotina</taxon>
        <taxon>Pichiomycetes</taxon>
        <taxon>Debaryomycetaceae</taxon>
        <taxon>Candida/Lodderomyces clade</taxon>
        <taxon>Candida</taxon>
    </lineage>
</organism>
<evidence type="ECO:0000250" key="1"/>
<evidence type="ECO:0000305" key="2"/>